<sequence>MADRNQRKVYTGRVVSDKMDKTITVVVETYKKHGLYGKRVKYSKKFKAHDENNIAKTGDVVRISETRPLSATKHFRLLEVVEEAVII</sequence>
<protein>
    <recommendedName>
        <fullName evidence="1">Small ribosomal subunit protein uS17</fullName>
    </recommendedName>
    <alternativeName>
        <fullName evidence="2">30S ribosomal protein S17</fullName>
    </alternativeName>
</protein>
<comment type="function">
    <text evidence="1">One of the primary rRNA binding proteins, it binds specifically to the 5'-end of 16S ribosomal RNA.</text>
</comment>
<comment type="subunit">
    <text evidence="1">Part of the 30S ribosomal subunit.</text>
</comment>
<comment type="similarity">
    <text evidence="1">Belongs to the universal ribosomal protein uS17 family.</text>
</comment>
<keyword id="KW-0687">Ribonucleoprotein</keyword>
<keyword id="KW-0689">Ribosomal protein</keyword>
<keyword id="KW-0694">RNA-binding</keyword>
<keyword id="KW-0699">rRNA-binding</keyword>
<proteinExistence type="inferred from homology"/>
<reference key="1">
    <citation type="journal article" date="2006" name="J. Bacteriol.">
        <title>Whole-genome sequence of Listeria welshimeri reveals common steps in genome reduction with Listeria innocua as compared to Listeria monocytogenes.</title>
        <authorList>
            <person name="Hain T."/>
            <person name="Steinweg C."/>
            <person name="Kuenne C.T."/>
            <person name="Billion A."/>
            <person name="Ghai R."/>
            <person name="Chatterjee S.S."/>
            <person name="Domann E."/>
            <person name="Kaerst U."/>
            <person name="Goesmann A."/>
            <person name="Bekel T."/>
            <person name="Bartels D."/>
            <person name="Kaiser O."/>
            <person name="Meyer F."/>
            <person name="Puehler A."/>
            <person name="Weisshaar B."/>
            <person name="Wehland J."/>
            <person name="Liang C."/>
            <person name="Dandekar T."/>
            <person name="Lampidis R."/>
            <person name="Kreft J."/>
            <person name="Goebel W."/>
            <person name="Chakraborty T."/>
        </authorList>
    </citation>
    <scope>NUCLEOTIDE SEQUENCE [LARGE SCALE GENOMIC DNA]</scope>
    <source>
        <strain>ATCC 35897 / DSM 20650 / CCUG 15529 / CIP 8149 / NCTC 11857 / SLCC 5334 / V8</strain>
    </source>
</reference>
<accession>A0ALV9</accession>
<name>RS17_LISW6</name>
<gene>
    <name evidence="1" type="primary">rpsQ</name>
    <name type="ordered locus">lwe2573</name>
</gene>
<dbReference type="EMBL" id="AM263198">
    <property type="protein sequence ID" value="CAK21991.1"/>
    <property type="molecule type" value="Genomic_DNA"/>
</dbReference>
<dbReference type="RefSeq" id="WP_003720941.1">
    <property type="nucleotide sequence ID" value="NC_008555.1"/>
</dbReference>
<dbReference type="SMR" id="A0ALV9"/>
<dbReference type="STRING" id="386043.lwe2573"/>
<dbReference type="GeneID" id="93240504"/>
<dbReference type="KEGG" id="lwe:lwe2573"/>
<dbReference type="eggNOG" id="COG0186">
    <property type="taxonomic scope" value="Bacteria"/>
</dbReference>
<dbReference type="HOGENOM" id="CLU_073626_1_0_9"/>
<dbReference type="OrthoDB" id="9811714at2"/>
<dbReference type="Proteomes" id="UP000000779">
    <property type="component" value="Chromosome"/>
</dbReference>
<dbReference type="GO" id="GO:0022627">
    <property type="term" value="C:cytosolic small ribosomal subunit"/>
    <property type="evidence" value="ECO:0007669"/>
    <property type="project" value="TreeGrafter"/>
</dbReference>
<dbReference type="GO" id="GO:0019843">
    <property type="term" value="F:rRNA binding"/>
    <property type="evidence" value="ECO:0007669"/>
    <property type="project" value="UniProtKB-UniRule"/>
</dbReference>
<dbReference type="GO" id="GO:0003735">
    <property type="term" value="F:structural constituent of ribosome"/>
    <property type="evidence" value="ECO:0007669"/>
    <property type="project" value="InterPro"/>
</dbReference>
<dbReference type="GO" id="GO:0006412">
    <property type="term" value="P:translation"/>
    <property type="evidence" value="ECO:0007669"/>
    <property type="project" value="UniProtKB-UniRule"/>
</dbReference>
<dbReference type="CDD" id="cd00364">
    <property type="entry name" value="Ribosomal_uS17"/>
    <property type="match status" value="1"/>
</dbReference>
<dbReference type="FunFam" id="2.40.50.140:FF:000026">
    <property type="entry name" value="30S ribosomal protein S17"/>
    <property type="match status" value="1"/>
</dbReference>
<dbReference type="Gene3D" id="2.40.50.140">
    <property type="entry name" value="Nucleic acid-binding proteins"/>
    <property type="match status" value="1"/>
</dbReference>
<dbReference type="HAMAP" id="MF_01345_B">
    <property type="entry name" value="Ribosomal_uS17_B"/>
    <property type="match status" value="1"/>
</dbReference>
<dbReference type="InterPro" id="IPR012340">
    <property type="entry name" value="NA-bd_OB-fold"/>
</dbReference>
<dbReference type="InterPro" id="IPR000266">
    <property type="entry name" value="Ribosomal_uS17"/>
</dbReference>
<dbReference type="InterPro" id="IPR019984">
    <property type="entry name" value="Ribosomal_uS17_bact/chlr"/>
</dbReference>
<dbReference type="InterPro" id="IPR019979">
    <property type="entry name" value="Ribosomal_uS17_CS"/>
</dbReference>
<dbReference type="NCBIfam" id="NF004123">
    <property type="entry name" value="PRK05610.1"/>
    <property type="match status" value="1"/>
</dbReference>
<dbReference type="NCBIfam" id="TIGR03635">
    <property type="entry name" value="uS17_bact"/>
    <property type="match status" value="1"/>
</dbReference>
<dbReference type="PANTHER" id="PTHR10744">
    <property type="entry name" value="40S RIBOSOMAL PROTEIN S11 FAMILY MEMBER"/>
    <property type="match status" value="1"/>
</dbReference>
<dbReference type="PANTHER" id="PTHR10744:SF1">
    <property type="entry name" value="SMALL RIBOSOMAL SUBUNIT PROTEIN US17M"/>
    <property type="match status" value="1"/>
</dbReference>
<dbReference type="Pfam" id="PF00366">
    <property type="entry name" value="Ribosomal_S17"/>
    <property type="match status" value="1"/>
</dbReference>
<dbReference type="PRINTS" id="PR00973">
    <property type="entry name" value="RIBOSOMALS17"/>
</dbReference>
<dbReference type="SUPFAM" id="SSF50249">
    <property type="entry name" value="Nucleic acid-binding proteins"/>
    <property type="match status" value="1"/>
</dbReference>
<dbReference type="PROSITE" id="PS00056">
    <property type="entry name" value="RIBOSOMAL_S17"/>
    <property type="match status" value="1"/>
</dbReference>
<evidence type="ECO:0000255" key="1">
    <source>
        <dbReference type="HAMAP-Rule" id="MF_01345"/>
    </source>
</evidence>
<evidence type="ECO:0000305" key="2"/>
<feature type="chain" id="PRO_1000054975" description="Small ribosomal subunit protein uS17">
    <location>
        <begin position="1"/>
        <end position="87"/>
    </location>
</feature>
<organism>
    <name type="scientific">Listeria welshimeri serovar 6b (strain ATCC 35897 / DSM 20650 / CCUG 15529 / CIP 8149 / NCTC 11857 / SLCC 5334 / V8)</name>
    <dbReference type="NCBI Taxonomy" id="386043"/>
    <lineage>
        <taxon>Bacteria</taxon>
        <taxon>Bacillati</taxon>
        <taxon>Bacillota</taxon>
        <taxon>Bacilli</taxon>
        <taxon>Bacillales</taxon>
        <taxon>Listeriaceae</taxon>
        <taxon>Listeria</taxon>
    </lineage>
</organism>